<proteinExistence type="inferred from homology"/>
<comment type="function">
    <text evidence="1">Catalyzes the transfer of an acetyl group from acetyl-CoA to tetrahydrodipicolinate.</text>
</comment>
<comment type="catalytic activity">
    <reaction evidence="1">
        <text>(S)-2,3,4,5-tetrahydrodipicolinate + acetyl-CoA + H2O = L-2-acetamido-6-oxoheptanedioate + CoA</text>
        <dbReference type="Rhea" id="RHEA:13085"/>
        <dbReference type="ChEBI" id="CHEBI:15377"/>
        <dbReference type="ChEBI" id="CHEBI:16845"/>
        <dbReference type="ChEBI" id="CHEBI:57287"/>
        <dbReference type="ChEBI" id="CHEBI:57288"/>
        <dbReference type="ChEBI" id="CHEBI:58117"/>
        <dbReference type="EC" id="2.3.1.89"/>
    </reaction>
</comment>
<comment type="pathway">
    <text evidence="1">Amino-acid biosynthesis; L-lysine biosynthesis via DAP pathway; LL-2,6-diaminopimelate from (S)-tetrahydrodipicolinate (acetylase route): step 1/3.</text>
</comment>
<comment type="similarity">
    <text evidence="1">Belongs to the transferase hexapeptide repeat family. DapH subfamily.</text>
</comment>
<dbReference type="EC" id="2.3.1.89" evidence="1"/>
<dbReference type="EMBL" id="CP000414">
    <property type="protein sequence ID" value="ABJ61778.1"/>
    <property type="molecule type" value="Genomic_DNA"/>
</dbReference>
<dbReference type="SMR" id="Q03YE4"/>
<dbReference type="EnsemblBacteria" id="ABJ61778">
    <property type="protein sequence ID" value="ABJ61778"/>
    <property type="gene ID" value="LEUM_0668"/>
</dbReference>
<dbReference type="GeneID" id="29577252"/>
<dbReference type="KEGG" id="lme:LEUM_0668"/>
<dbReference type="eggNOG" id="COG2171">
    <property type="taxonomic scope" value="Bacteria"/>
</dbReference>
<dbReference type="HOGENOM" id="CLU_103751_0_0_9"/>
<dbReference type="UniPathway" id="UPA00034">
    <property type="reaction ID" value="UER00022"/>
</dbReference>
<dbReference type="Proteomes" id="UP000000362">
    <property type="component" value="Chromosome"/>
</dbReference>
<dbReference type="GO" id="GO:0047200">
    <property type="term" value="F:tetrahydrodipicolinate N-acetyltransferase activity"/>
    <property type="evidence" value="ECO:0007669"/>
    <property type="project" value="UniProtKB-EC"/>
</dbReference>
<dbReference type="GO" id="GO:0019877">
    <property type="term" value="P:diaminopimelate biosynthetic process"/>
    <property type="evidence" value="ECO:0007669"/>
    <property type="project" value="UniProtKB-UniRule"/>
</dbReference>
<dbReference type="GO" id="GO:0009089">
    <property type="term" value="P:lysine biosynthetic process via diaminopimelate"/>
    <property type="evidence" value="ECO:0007669"/>
    <property type="project" value="UniProtKB-UniRule"/>
</dbReference>
<dbReference type="Gene3D" id="2.160.10.10">
    <property type="entry name" value="Hexapeptide repeat proteins"/>
    <property type="match status" value="1"/>
</dbReference>
<dbReference type="Gene3D" id="3.30.70.250">
    <property type="entry name" value="Malonyl-CoA ACP transacylase, ACP-binding"/>
    <property type="match status" value="1"/>
</dbReference>
<dbReference type="HAMAP" id="MF_01691">
    <property type="entry name" value="DapH"/>
    <property type="match status" value="1"/>
</dbReference>
<dbReference type="InterPro" id="IPR019873">
    <property type="entry name" value="DapH"/>
</dbReference>
<dbReference type="InterPro" id="IPR013710">
    <property type="entry name" value="DapH_N"/>
</dbReference>
<dbReference type="InterPro" id="IPR001451">
    <property type="entry name" value="Hexapep"/>
</dbReference>
<dbReference type="InterPro" id="IPR018357">
    <property type="entry name" value="Hexapep_transf_CS"/>
</dbReference>
<dbReference type="InterPro" id="IPR050179">
    <property type="entry name" value="Trans_hexapeptide_repeat"/>
</dbReference>
<dbReference type="InterPro" id="IPR011004">
    <property type="entry name" value="Trimer_LpxA-like_sf"/>
</dbReference>
<dbReference type="NCBIfam" id="TIGR03532">
    <property type="entry name" value="DapD_Ac"/>
    <property type="match status" value="1"/>
</dbReference>
<dbReference type="PANTHER" id="PTHR43300:SF10">
    <property type="entry name" value="2,3,4,5-TETRAHYDROPYRIDINE-2,6-DICARBOXYLATE N-ACETYLTRANSFERASE"/>
    <property type="match status" value="1"/>
</dbReference>
<dbReference type="PANTHER" id="PTHR43300">
    <property type="entry name" value="ACETYLTRANSFERASE"/>
    <property type="match status" value="1"/>
</dbReference>
<dbReference type="Pfam" id="PF08503">
    <property type="entry name" value="DapH_N"/>
    <property type="match status" value="1"/>
</dbReference>
<dbReference type="Pfam" id="PF00132">
    <property type="entry name" value="Hexapep"/>
    <property type="match status" value="1"/>
</dbReference>
<dbReference type="Pfam" id="PF14602">
    <property type="entry name" value="Hexapep_2"/>
    <property type="match status" value="1"/>
</dbReference>
<dbReference type="SUPFAM" id="SSF51161">
    <property type="entry name" value="Trimeric LpxA-like enzymes"/>
    <property type="match status" value="1"/>
</dbReference>
<dbReference type="PROSITE" id="PS00101">
    <property type="entry name" value="HEXAPEP_TRANSFERASES"/>
    <property type="match status" value="2"/>
</dbReference>
<evidence type="ECO:0000255" key="1">
    <source>
        <dbReference type="HAMAP-Rule" id="MF_01691"/>
    </source>
</evidence>
<keyword id="KW-0012">Acyltransferase</keyword>
<keyword id="KW-0028">Amino-acid biosynthesis</keyword>
<keyword id="KW-0220">Diaminopimelate biosynthesis</keyword>
<keyword id="KW-0457">Lysine biosynthesis</keyword>
<keyword id="KW-1185">Reference proteome</keyword>
<keyword id="KW-0677">Repeat</keyword>
<keyword id="KW-0808">Transferase</keyword>
<organism>
    <name type="scientific">Leuconostoc mesenteroides subsp. mesenteroides (strain ATCC 8293 / DSM 20343 / BCRC 11652 / CCM 1803 / JCM 6124 / NCDO 523 / NBRC 100496 / NCIMB 8023 / NCTC 12954 / NRRL B-1118 / 37Y)</name>
    <dbReference type="NCBI Taxonomy" id="203120"/>
    <lineage>
        <taxon>Bacteria</taxon>
        <taxon>Bacillati</taxon>
        <taxon>Bacillota</taxon>
        <taxon>Bacilli</taxon>
        <taxon>Lactobacillales</taxon>
        <taxon>Lactobacillaceae</taxon>
        <taxon>Leuconostoc</taxon>
    </lineage>
</organism>
<protein>
    <recommendedName>
        <fullName evidence="1">2,3,4,5-tetrahydropyridine-2,6-dicarboxylate N-acetyltransferase</fullName>
        <ecNumber evidence="1">2.3.1.89</ecNumber>
    </recommendedName>
    <alternativeName>
        <fullName evidence="1">Tetrahydrodipicolinate N-acetyltransferase</fullName>
        <shortName evidence="1">THP acetyltransferase</shortName>
        <shortName evidence="1">Tetrahydropicolinate acetylase</shortName>
    </alternativeName>
</protein>
<name>DAPH_LEUMM</name>
<feature type="chain" id="PRO_0000376675" description="2,3,4,5-tetrahydropyridine-2,6-dicarboxylate N-acetyltransferase">
    <location>
        <begin position="1"/>
        <end position="233"/>
    </location>
</feature>
<sequence>MAENEAQKLINFIANAKKITPVKVTYKGTLATEVPDTVQQFGDESFGQLIGDWSEIELLIKNLPSEDVFIENDSRNSAVPLLDKKEINARIEPGAIIRDQVEIGDNAVIMLGAVINIGAEIGANTMIDMGAVLGGRAIVGENSHIGAGAVLAGVIEPASAQPVRIGNNVLVGANAVVIEGVQVGDGAVVAAGAIVTKDVPANTVVAGVPAKVIKEIDSKTQQKTALIDALRGL</sequence>
<reference key="1">
    <citation type="journal article" date="2006" name="Proc. Natl. Acad. Sci. U.S.A.">
        <title>Comparative genomics of the lactic acid bacteria.</title>
        <authorList>
            <person name="Makarova K.S."/>
            <person name="Slesarev A."/>
            <person name="Wolf Y.I."/>
            <person name="Sorokin A."/>
            <person name="Mirkin B."/>
            <person name="Koonin E.V."/>
            <person name="Pavlov A."/>
            <person name="Pavlova N."/>
            <person name="Karamychev V."/>
            <person name="Polouchine N."/>
            <person name="Shakhova V."/>
            <person name="Grigoriev I."/>
            <person name="Lou Y."/>
            <person name="Rohksar D."/>
            <person name="Lucas S."/>
            <person name="Huang K."/>
            <person name="Goodstein D.M."/>
            <person name="Hawkins T."/>
            <person name="Plengvidhya V."/>
            <person name="Welker D."/>
            <person name="Hughes J."/>
            <person name="Goh Y."/>
            <person name="Benson A."/>
            <person name="Baldwin K."/>
            <person name="Lee J.-H."/>
            <person name="Diaz-Muniz I."/>
            <person name="Dosti B."/>
            <person name="Smeianov V."/>
            <person name="Wechter W."/>
            <person name="Barabote R."/>
            <person name="Lorca G."/>
            <person name="Altermann E."/>
            <person name="Barrangou R."/>
            <person name="Ganesan B."/>
            <person name="Xie Y."/>
            <person name="Rawsthorne H."/>
            <person name="Tamir D."/>
            <person name="Parker C."/>
            <person name="Breidt F."/>
            <person name="Broadbent J.R."/>
            <person name="Hutkins R."/>
            <person name="O'Sullivan D."/>
            <person name="Steele J."/>
            <person name="Unlu G."/>
            <person name="Saier M.H. Jr."/>
            <person name="Klaenhammer T."/>
            <person name="Richardson P."/>
            <person name="Kozyavkin S."/>
            <person name="Weimer B.C."/>
            <person name="Mills D.A."/>
        </authorList>
    </citation>
    <scope>NUCLEOTIDE SEQUENCE [LARGE SCALE GENOMIC DNA]</scope>
    <source>
        <strain>ATCC 8293 / DSM 20343 / BCRC 11652 / CCM 1803 / JCM 6124 / NCDO 523 / NBRC 100496 / NCIMB 8023 / NCTC 12954 / NRRL B-1118 / 37Y</strain>
    </source>
</reference>
<gene>
    <name evidence="1" type="primary">dapH</name>
    <name type="ordered locus">LEUM_0668</name>
</gene>
<accession>Q03YE4</accession>